<organism>
    <name type="scientific">Francisella tularensis subsp. tularensis (strain SCHU S4 / Schu 4)</name>
    <dbReference type="NCBI Taxonomy" id="177416"/>
    <lineage>
        <taxon>Bacteria</taxon>
        <taxon>Pseudomonadati</taxon>
        <taxon>Pseudomonadota</taxon>
        <taxon>Gammaproteobacteria</taxon>
        <taxon>Thiotrichales</taxon>
        <taxon>Francisellaceae</taxon>
        <taxon>Francisella</taxon>
    </lineage>
</organism>
<comment type="catalytic activity">
    <reaction evidence="1">
        <text>tRNA(Phe) + L-phenylalanine + ATP = L-phenylalanyl-tRNA(Phe) + AMP + diphosphate + H(+)</text>
        <dbReference type="Rhea" id="RHEA:19413"/>
        <dbReference type="Rhea" id="RHEA-COMP:9668"/>
        <dbReference type="Rhea" id="RHEA-COMP:9699"/>
        <dbReference type="ChEBI" id="CHEBI:15378"/>
        <dbReference type="ChEBI" id="CHEBI:30616"/>
        <dbReference type="ChEBI" id="CHEBI:33019"/>
        <dbReference type="ChEBI" id="CHEBI:58095"/>
        <dbReference type="ChEBI" id="CHEBI:78442"/>
        <dbReference type="ChEBI" id="CHEBI:78531"/>
        <dbReference type="ChEBI" id="CHEBI:456215"/>
        <dbReference type="EC" id="6.1.1.20"/>
    </reaction>
</comment>
<comment type="cofactor">
    <cofactor evidence="1">
        <name>Mg(2+)</name>
        <dbReference type="ChEBI" id="CHEBI:18420"/>
    </cofactor>
    <text evidence="1">Binds 2 magnesium ions per tetramer.</text>
</comment>
<comment type="subunit">
    <text evidence="1">Tetramer of two alpha and two beta subunits.</text>
</comment>
<comment type="subcellular location">
    <subcellularLocation>
        <location evidence="1">Cytoplasm</location>
    </subcellularLocation>
</comment>
<comment type="similarity">
    <text evidence="1">Belongs to the class-II aminoacyl-tRNA synthetase family. Phe-tRNA synthetase alpha subunit type 1 subfamily.</text>
</comment>
<evidence type="ECO:0000255" key="1">
    <source>
        <dbReference type="HAMAP-Rule" id="MF_00281"/>
    </source>
</evidence>
<name>SYFA_FRATT</name>
<reference key="1">
    <citation type="journal article" date="2005" name="Nat. Genet.">
        <title>The complete genome sequence of Francisella tularensis, the causative agent of tularemia.</title>
        <authorList>
            <person name="Larsson P."/>
            <person name="Oyston P.C.F."/>
            <person name="Chain P."/>
            <person name="Chu M.C."/>
            <person name="Duffield M."/>
            <person name="Fuxelius H.-H."/>
            <person name="Garcia E."/>
            <person name="Haelltorp G."/>
            <person name="Johansson D."/>
            <person name="Isherwood K.E."/>
            <person name="Karp P.D."/>
            <person name="Larsson E."/>
            <person name="Liu Y."/>
            <person name="Michell S."/>
            <person name="Prior J."/>
            <person name="Prior R."/>
            <person name="Malfatti S."/>
            <person name="Sjoestedt A."/>
            <person name="Svensson K."/>
            <person name="Thompson N."/>
            <person name="Vergez L."/>
            <person name="Wagg J.K."/>
            <person name="Wren B.W."/>
            <person name="Lindler L.E."/>
            <person name="Andersson S.G.E."/>
            <person name="Forsman M."/>
            <person name="Titball R.W."/>
        </authorList>
    </citation>
    <scope>NUCLEOTIDE SEQUENCE [LARGE SCALE GENOMIC DNA]</scope>
    <source>
        <strain>SCHU S4 / Schu 4</strain>
    </source>
</reference>
<accession>Q5NG53</accession>
<feature type="chain" id="PRO_0000126706" description="Phenylalanine--tRNA ligase alpha subunit">
    <location>
        <begin position="1"/>
        <end position="337"/>
    </location>
</feature>
<feature type="binding site" evidence="1">
    <location>
        <position position="252"/>
    </location>
    <ligand>
        <name>Mg(2+)</name>
        <dbReference type="ChEBI" id="CHEBI:18420"/>
        <note>shared with beta subunit</note>
    </ligand>
</feature>
<dbReference type="EC" id="6.1.1.20" evidence="1"/>
<dbReference type="EMBL" id="AJ749949">
    <property type="protein sequence ID" value="CAG45636.1"/>
    <property type="molecule type" value="Genomic_DNA"/>
</dbReference>
<dbReference type="RefSeq" id="WP_003021092.1">
    <property type="nucleotide sequence ID" value="NZ_CP010290.1"/>
</dbReference>
<dbReference type="RefSeq" id="YP_169989.1">
    <property type="nucleotide sequence ID" value="NC_006570.2"/>
</dbReference>
<dbReference type="SMR" id="Q5NG53"/>
<dbReference type="IntAct" id="Q5NG53">
    <property type="interactions" value="4"/>
</dbReference>
<dbReference type="STRING" id="177416.FTT_1003c"/>
<dbReference type="DNASU" id="3191372"/>
<dbReference type="EnsemblBacteria" id="CAG45636">
    <property type="protein sequence ID" value="CAG45636"/>
    <property type="gene ID" value="FTT_1003c"/>
</dbReference>
<dbReference type="KEGG" id="ftu:FTT_1003c"/>
<dbReference type="eggNOG" id="COG0016">
    <property type="taxonomic scope" value="Bacteria"/>
</dbReference>
<dbReference type="OrthoDB" id="9800719at2"/>
<dbReference type="Proteomes" id="UP000001174">
    <property type="component" value="Chromosome"/>
</dbReference>
<dbReference type="GO" id="GO:0005737">
    <property type="term" value="C:cytoplasm"/>
    <property type="evidence" value="ECO:0007669"/>
    <property type="project" value="UniProtKB-SubCell"/>
</dbReference>
<dbReference type="GO" id="GO:0005524">
    <property type="term" value="F:ATP binding"/>
    <property type="evidence" value="ECO:0007669"/>
    <property type="project" value="UniProtKB-UniRule"/>
</dbReference>
<dbReference type="GO" id="GO:0000287">
    <property type="term" value="F:magnesium ion binding"/>
    <property type="evidence" value="ECO:0007669"/>
    <property type="project" value="UniProtKB-UniRule"/>
</dbReference>
<dbReference type="GO" id="GO:0004826">
    <property type="term" value="F:phenylalanine-tRNA ligase activity"/>
    <property type="evidence" value="ECO:0007669"/>
    <property type="project" value="UniProtKB-UniRule"/>
</dbReference>
<dbReference type="GO" id="GO:0000049">
    <property type="term" value="F:tRNA binding"/>
    <property type="evidence" value="ECO:0007669"/>
    <property type="project" value="InterPro"/>
</dbReference>
<dbReference type="GO" id="GO:0006432">
    <property type="term" value="P:phenylalanyl-tRNA aminoacylation"/>
    <property type="evidence" value="ECO:0007669"/>
    <property type="project" value="UniProtKB-UniRule"/>
</dbReference>
<dbReference type="CDD" id="cd00496">
    <property type="entry name" value="PheRS_alpha_core"/>
    <property type="match status" value="1"/>
</dbReference>
<dbReference type="FunFam" id="3.30.930.10:FF:000003">
    <property type="entry name" value="Phenylalanine--tRNA ligase alpha subunit"/>
    <property type="match status" value="1"/>
</dbReference>
<dbReference type="Gene3D" id="3.30.930.10">
    <property type="entry name" value="Bira Bifunctional Protein, Domain 2"/>
    <property type="match status" value="1"/>
</dbReference>
<dbReference type="HAMAP" id="MF_00281">
    <property type="entry name" value="Phe_tRNA_synth_alpha1"/>
    <property type="match status" value="1"/>
</dbReference>
<dbReference type="InterPro" id="IPR006195">
    <property type="entry name" value="aa-tRNA-synth_II"/>
</dbReference>
<dbReference type="InterPro" id="IPR045864">
    <property type="entry name" value="aa-tRNA-synth_II/BPL/LPL"/>
</dbReference>
<dbReference type="InterPro" id="IPR004529">
    <property type="entry name" value="Phe-tRNA-synth_IIc_asu"/>
</dbReference>
<dbReference type="InterPro" id="IPR004188">
    <property type="entry name" value="Phe-tRNA_ligase_II_N"/>
</dbReference>
<dbReference type="InterPro" id="IPR022911">
    <property type="entry name" value="Phe_tRNA_ligase_alpha1_bac"/>
</dbReference>
<dbReference type="InterPro" id="IPR002319">
    <property type="entry name" value="Phenylalanyl-tRNA_Synthase"/>
</dbReference>
<dbReference type="InterPro" id="IPR010978">
    <property type="entry name" value="tRNA-bd_arm"/>
</dbReference>
<dbReference type="NCBIfam" id="TIGR00468">
    <property type="entry name" value="pheS"/>
    <property type="match status" value="1"/>
</dbReference>
<dbReference type="PANTHER" id="PTHR11538:SF41">
    <property type="entry name" value="PHENYLALANINE--TRNA LIGASE, MITOCHONDRIAL"/>
    <property type="match status" value="1"/>
</dbReference>
<dbReference type="PANTHER" id="PTHR11538">
    <property type="entry name" value="PHENYLALANYL-TRNA SYNTHETASE"/>
    <property type="match status" value="1"/>
</dbReference>
<dbReference type="Pfam" id="PF02912">
    <property type="entry name" value="Phe_tRNA-synt_N"/>
    <property type="match status" value="1"/>
</dbReference>
<dbReference type="Pfam" id="PF01409">
    <property type="entry name" value="tRNA-synt_2d"/>
    <property type="match status" value="1"/>
</dbReference>
<dbReference type="SUPFAM" id="SSF55681">
    <property type="entry name" value="Class II aaRS and biotin synthetases"/>
    <property type="match status" value="1"/>
</dbReference>
<dbReference type="SUPFAM" id="SSF46589">
    <property type="entry name" value="tRNA-binding arm"/>
    <property type="match status" value="1"/>
</dbReference>
<dbReference type="PROSITE" id="PS50862">
    <property type="entry name" value="AA_TRNA_LIGASE_II"/>
    <property type="match status" value="1"/>
</dbReference>
<gene>
    <name evidence="1" type="primary">pheS</name>
    <name type="ordered locus">FTT_1003c</name>
</gene>
<protein>
    <recommendedName>
        <fullName evidence="1">Phenylalanine--tRNA ligase alpha subunit</fullName>
        <ecNumber evidence="1">6.1.1.20</ecNumber>
    </recommendedName>
    <alternativeName>
        <fullName evidence="1">Phenylalanyl-tRNA synthetase alpha subunit</fullName>
        <shortName evidence="1">PheRS</shortName>
    </alternativeName>
</protein>
<sequence length="337" mass="38477">MQIVEQMKDKALAELNLVKDKKTLDDIRVKYLGKKGELTEMMKLIATLPNDEKPKLGQAVNIAKQALQEAINLKLANFEEQELNEKLAQEKIDITLSGVGQNQGSLHPVTKTLNRIEAFFKQNGFAIEFGPEIESDYYNFETLNIPSHHPARAMHDTFYIDETHVLRTHTSGVQIRTMEKQQPPIRIIAPGRVYRCDSDITHTPMFHQVEGLLVDKDVSFADLKGLLHAFLNSFFEKDLKVRFRPSYFPFTEPSAEADIECVMCDGKGCRVCKHTGWLEVLGCGMVHPKVLKAGNIDSEKYQGFAFGMGVERLSMLRYGIDDLRMFFENDLRFLKQF</sequence>
<proteinExistence type="inferred from homology"/>
<keyword id="KW-0030">Aminoacyl-tRNA synthetase</keyword>
<keyword id="KW-0067">ATP-binding</keyword>
<keyword id="KW-0963">Cytoplasm</keyword>
<keyword id="KW-0436">Ligase</keyword>
<keyword id="KW-0460">Magnesium</keyword>
<keyword id="KW-0479">Metal-binding</keyword>
<keyword id="KW-0547">Nucleotide-binding</keyword>
<keyword id="KW-0648">Protein biosynthesis</keyword>
<keyword id="KW-1185">Reference proteome</keyword>